<comment type="function">
    <text evidence="3 7">A cytochrome P450 monooxygenase involved in the metabolism of arachidonic acid and its conjugates (PubMed:14660610, PubMed:24563460). Mechanistically, uses molecular oxygen inserting one oxygen atom into a substrate, and reducing the second into a water molecule, with two electrons provided by NADPH via cytochrome P450 reductase (CPR; NADPH-ferrihemoprotein reductase) (PubMed:14660610, PubMed:24563460). Acts as an omega and omega-1 hydroxylase for arachidonic acid and possibly for other long chain fatty acids. May modulate the arachidonic acid signaling pathway and play a role in other fatty acid signaling processes (PubMed:14660610, PubMed:24563460). May down-regulate the biological activities of N-arachidonoyl-serotonin, an endocannabinoid that has anti-nociceptive effects through inhibition of fatty acid amide hydrolase FAAH, TRPV1 receptor and T-type calcium channels. Catalyzes C-2 oxidation of the indole ring of N-arachidonoyl-serotonin forming a less active product 2-oxo-N-arachidonoyl-serotonin (PubMed:24563460).</text>
</comment>
<comment type="catalytic activity">
    <reaction evidence="3 7">
        <text>an omega-methyl-long-chain fatty acid + reduced [NADPH--hemoprotein reductase] + O2 = an omega-hydroxy-long-chain fatty acid + oxidized [NADPH--hemoprotein reductase] + H2O + H(+)</text>
        <dbReference type="Rhea" id="RHEA:56748"/>
        <dbReference type="Rhea" id="RHEA-COMP:11964"/>
        <dbReference type="Rhea" id="RHEA-COMP:11965"/>
        <dbReference type="ChEBI" id="CHEBI:15377"/>
        <dbReference type="ChEBI" id="CHEBI:15378"/>
        <dbReference type="ChEBI" id="CHEBI:15379"/>
        <dbReference type="ChEBI" id="CHEBI:57618"/>
        <dbReference type="ChEBI" id="CHEBI:58210"/>
        <dbReference type="ChEBI" id="CHEBI:140991"/>
        <dbReference type="ChEBI" id="CHEBI:140992"/>
        <dbReference type="EC" id="1.14.14.80"/>
    </reaction>
    <physiologicalReaction direction="left-to-right" evidence="12 13">
        <dbReference type="Rhea" id="RHEA:56749"/>
    </physiologicalReaction>
</comment>
<comment type="catalytic activity">
    <reaction evidence="3 7">
        <text>(5Z,8Z,11Z,14Z)-eicosatetraenoate + reduced [NADPH--hemoprotein reductase] + O2 = 19-hydroxy-(5Z,8Z,11Z,14Z)-eicosatetraenoate + oxidized [NADPH--hemoprotein reductase] + H2O + H(+)</text>
        <dbReference type="Rhea" id="RHEA:39759"/>
        <dbReference type="Rhea" id="RHEA-COMP:11964"/>
        <dbReference type="Rhea" id="RHEA-COMP:11965"/>
        <dbReference type="ChEBI" id="CHEBI:15377"/>
        <dbReference type="ChEBI" id="CHEBI:15378"/>
        <dbReference type="ChEBI" id="CHEBI:15379"/>
        <dbReference type="ChEBI" id="CHEBI:32395"/>
        <dbReference type="ChEBI" id="CHEBI:57618"/>
        <dbReference type="ChEBI" id="CHEBI:58210"/>
        <dbReference type="ChEBI" id="CHEBI:76627"/>
    </reaction>
    <physiologicalReaction direction="left-to-right" evidence="12 13">
        <dbReference type="Rhea" id="RHEA:39760"/>
    </physiologicalReaction>
</comment>
<comment type="catalytic activity">
    <reaction evidence="3 7">
        <text>(5Z,8Z,11Z,14Z)-eicosatetraenoate + reduced [NADPH--hemoprotein reductase] + O2 = 20-hydroxy-(5Z,8Z,11Z,14Z)-eicosatetraenoate + oxidized [NADPH--hemoprotein reductase] + H2O + H(+)</text>
        <dbReference type="Rhea" id="RHEA:39755"/>
        <dbReference type="Rhea" id="RHEA-COMP:11964"/>
        <dbReference type="Rhea" id="RHEA-COMP:11965"/>
        <dbReference type="ChEBI" id="CHEBI:15377"/>
        <dbReference type="ChEBI" id="CHEBI:15378"/>
        <dbReference type="ChEBI" id="CHEBI:15379"/>
        <dbReference type="ChEBI" id="CHEBI:32395"/>
        <dbReference type="ChEBI" id="CHEBI:57618"/>
        <dbReference type="ChEBI" id="CHEBI:58210"/>
        <dbReference type="ChEBI" id="CHEBI:76624"/>
    </reaction>
    <physiologicalReaction direction="left-to-right" evidence="12 13">
        <dbReference type="Rhea" id="RHEA:39756"/>
    </physiologicalReaction>
</comment>
<comment type="catalytic activity">
    <reaction evidence="7">
        <text>N-[(5Z,8Z,11Z,14Z)-eicosatetraenoyl]-serotonin + reduced [NADPH--hemoprotein reductase] + O2 = 2-oxo-N-[(5Z,8Z,11Z,14Z)-eicosatetraenoyl]-serotonin + oxidized [NADPH--hemoprotein reductase] + H2O + H(+)</text>
        <dbReference type="Rhea" id="RHEA:50296"/>
        <dbReference type="Rhea" id="RHEA-COMP:11964"/>
        <dbReference type="Rhea" id="RHEA-COMP:11965"/>
        <dbReference type="ChEBI" id="CHEBI:15377"/>
        <dbReference type="ChEBI" id="CHEBI:15378"/>
        <dbReference type="ChEBI" id="CHEBI:15379"/>
        <dbReference type="ChEBI" id="CHEBI:57618"/>
        <dbReference type="ChEBI" id="CHEBI:58210"/>
        <dbReference type="ChEBI" id="CHEBI:132255"/>
        <dbReference type="ChEBI" id="CHEBI:132256"/>
    </reaction>
    <physiologicalReaction direction="left-to-right" evidence="13">
        <dbReference type="Rhea" id="RHEA:50297"/>
    </physiologicalReaction>
</comment>
<comment type="cofactor">
    <cofactor evidence="7">
        <name>heme</name>
        <dbReference type="ChEBI" id="CHEBI:30413"/>
    </cofactor>
</comment>
<comment type="biophysicochemical properties">
    <kinetics>
        <KM>2.7 uM for arachidonic acid</KM>
        <KM evidence="7">82 uM for N-arachidonoylserotonin</KM>
    </kinetics>
</comment>
<comment type="pathway">
    <text evidence="12 13">Lipid metabolism; arachidonate metabolism.</text>
</comment>
<comment type="subcellular location">
    <subcellularLocation>
        <location evidence="3">Endoplasmic reticulum membrane</location>
        <topology evidence="2">Multi-pass membrane protein</topology>
    </subcellularLocation>
    <subcellularLocation>
        <location evidence="3">Microsome membrane</location>
        <topology evidence="2">Multi-pass membrane protein</topology>
    </subcellularLocation>
    <subcellularLocation>
        <location evidence="6">Mitochondrion inner membrane</location>
        <topology evidence="2">Multi-pass membrane protein</topology>
    </subcellularLocation>
</comment>
<comment type="alternative products">
    <event type="alternative splicing"/>
    <isoform>
        <id>Q7Z449-1</id>
        <name>1</name>
        <sequence type="displayed"/>
    </isoform>
    <isoform>
        <id>Q7Z449-2</id>
        <name>2</name>
        <sequence type="described" ref="VSP_026222 VSP_026223"/>
    </isoform>
</comment>
<comment type="tissue specificity">
    <text evidence="3 4 5">Widely expressed with stronger expression in thymus, heart and cerebellum.</text>
</comment>
<comment type="developmental stage">
    <text evidence="3 5">Expressed in fetal thymus.</text>
</comment>
<comment type="disease" evidence="6">
    <disease id="DI-03680">
        <name>Spastic paraplegia 56, autosomal recessive, with or without pseudoxanthoma elasticum</name>
        <acronym>SPG56</acronym>
        <description>A form of spastic paraplegia, a neurodegenerative disorder characterized by a slow, gradual, progressive weakness and spasticity of the lower limbs. Rate of progression and the severity of symptoms are quite variable. Initial symptoms may include difficulty with balance, weakness and stiffness in the legs, muscle spasms, and dragging the toes when walking. Complicated forms are recognized by additional variable features including spastic quadriparesis, seizures, dementia, amyotrophy, extrapyramidal disturbance, cerebral or cerebellar atrophy, optic atrophy, and peripheral neuropathy, as well as by extra neurological manifestations. In SPG56, upper limbs are often also affected. Some SPG56 patients may have a subclinical axonal neuropathy; others also have pseudoxanthoma elasticum.</description>
        <dbReference type="MIM" id="615030"/>
    </disease>
    <text>The disease is caused by variants affecting the gene represented in this entry.</text>
</comment>
<comment type="similarity">
    <text evidence="11">Belongs to the cytochrome P450 family.</text>
</comment>
<gene>
    <name evidence="8 14" type="primary">CYP2U1</name>
</gene>
<dbReference type="EC" id="1.14.14.80" evidence="3 7"/>
<dbReference type="EMBL" id="AY343323">
    <property type="protein sequence ID" value="AAQ21380.1"/>
    <property type="molecule type" value="mRNA"/>
</dbReference>
<dbReference type="EMBL" id="CH471057">
    <property type="protein sequence ID" value="EAX06216.1"/>
    <property type="molecule type" value="Genomic_DNA"/>
</dbReference>
<dbReference type="EMBL" id="BC012027">
    <property type="protein sequence ID" value="AAH12027.1"/>
    <property type="molecule type" value="mRNA"/>
</dbReference>
<dbReference type="EMBL" id="BC132767">
    <property type="protein sequence ID" value="AAI32768.1"/>
    <property type="molecule type" value="mRNA"/>
</dbReference>
<dbReference type="EMBL" id="BC136483">
    <property type="protein sequence ID" value="AAI36484.1"/>
    <property type="molecule type" value="mRNA"/>
</dbReference>
<dbReference type="CCDS" id="CCDS34047.1">
    <molecule id="Q7Z449-1"/>
</dbReference>
<dbReference type="RefSeq" id="NP_898898.1">
    <molecule id="Q7Z449-1"/>
    <property type="nucleotide sequence ID" value="NM_183075.3"/>
</dbReference>
<dbReference type="SMR" id="Q7Z449"/>
<dbReference type="BioGRID" id="125252">
    <property type="interactions" value="8"/>
</dbReference>
<dbReference type="FunCoup" id="Q7Z449">
    <property type="interactions" value="1669"/>
</dbReference>
<dbReference type="IntAct" id="Q7Z449">
    <property type="interactions" value="3"/>
</dbReference>
<dbReference type="STRING" id="9606.ENSP00000333212"/>
<dbReference type="BindingDB" id="Q7Z449"/>
<dbReference type="ChEMBL" id="CHEMBL4523986"/>
<dbReference type="SwissLipids" id="SLP:000001048"/>
<dbReference type="GlyGen" id="Q7Z449">
    <property type="glycosylation" value="1 site"/>
</dbReference>
<dbReference type="iPTMnet" id="Q7Z449"/>
<dbReference type="PhosphoSitePlus" id="Q7Z449"/>
<dbReference type="BioMuta" id="CYP2U1"/>
<dbReference type="DMDM" id="74762432"/>
<dbReference type="jPOST" id="Q7Z449"/>
<dbReference type="MassIVE" id="Q7Z449"/>
<dbReference type="PaxDb" id="9606-ENSP00000333212"/>
<dbReference type="PeptideAtlas" id="Q7Z449"/>
<dbReference type="ProteomicsDB" id="69149">
    <molecule id="Q7Z449-1"/>
</dbReference>
<dbReference type="ProteomicsDB" id="69150">
    <molecule id="Q7Z449-2"/>
</dbReference>
<dbReference type="Pumba" id="Q7Z449"/>
<dbReference type="Antibodypedia" id="26251">
    <property type="antibodies" value="135 antibodies from 25 providers"/>
</dbReference>
<dbReference type="DNASU" id="113612"/>
<dbReference type="Ensembl" id="ENST00000332884.11">
    <molecule id="Q7Z449-1"/>
    <property type="protein sequence ID" value="ENSP00000333212.6"/>
    <property type="gene ID" value="ENSG00000155016.18"/>
</dbReference>
<dbReference type="GeneID" id="113612"/>
<dbReference type="KEGG" id="hsa:113612"/>
<dbReference type="MANE-Select" id="ENST00000332884.11">
    <property type="protein sequence ID" value="ENSP00000333212.6"/>
    <property type="RefSeq nucleotide sequence ID" value="NM_183075.3"/>
    <property type="RefSeq protein sequence ID" value="NP_898898.1"/>
</dbReference>
<dbReference type="UCSC" id="uc003hyp.4">
    <molecule id="Q7Z449-1"/>
    <property type="organism name" value="human"/>
</dbReference>
<dbReference type="AGR" id="HGNC:20582"/>
<dbReference type="CTD" id="113612"/>
<dbReference type="DisGeNET" id="113612"/>
<dbReference type="GeneCards" id="CYP2U1"/>
<dbReference type="HGNC" id="HGNC:20582">
    <property type="gene designation" value="CYP2U1"/>
</dbReference>
<dbReference type="HPA" id="ENSG00000155016">
    <property type="expression patterns" value="Tissue enriched (lymphoid)"/>
</dbReference>
<dbReference type="MalaCards" id="CYP2U1"/>
<dbReference type="MIM" id="610670">
    <property type="type" value="gene"/>
</dbReference>
<dbReference type="MIM" id="615030">
    <property type="type" value="phenotype"/>
</dbReference>
<dbReference type="neXtProt" id="NX_Q7Z449"/>
<dbReference type="OpenTargets" id="ENSG00000155016"/>
<dbReference type="Orphanet" id="320411">
    <property type="disease" value="Autosomal recessive spastic paraplegia type 56"/>
</dbReference>
<dbReference type="PharmGKB" id="PA134924269"/>
<dbReference type="VEuPathDB" id="HostDB:ENSG00000155016"/>
<dbReference type="eggNOG" id="KOG0156">
    <property type="taxonomic scope" value="Eukaryota"/>
</dbReference>
<dbReference type="GeneTree" id="ENSGT00940000157714"/>
<dbReference type="HOGENOM" id="CLU_001570_22_3_1"/>
<dbReference type="InParanoid" id="Q7Z449"/>
<dbReference type="OMA" id="EPCIQQG"/>
<dbReference type="OrthoDB" id="1844152at2759"/>
<dbReference type="PAN-GO" id="Q7Z449">
    <property type="GO annotations" value="7 GO annotations based on evolutionary models"/>
</dbReference>
<dbReference type="PhylomeDB" id="Q7Z449"/>
<dbReference type="TreeFam" id="TF352043"/>
<dbReference type="PathwayCommons" id="Q7Z449"/>
<dbReference type="Reactome" id="R-HSA-211958">
    <property type="pathway name" value="Miscellaneous substrates"/>
</dbReference>
<dbReference type="Reactome" id="R-HSA-2142816">
    <property type="pathway name" value="Synthesis of (16-20)-hydroxyeicosatetraenoic acids (HETE)"/>
</dbReference>
<dbReference type="Reactome" id="R-HSA-5579011">
    <property type="pathway name" value="Defective CYP2U1 causes SPG56"/>
</dbReference>
<dbReference type="SABIO-RK" id="Q7Z449"/>
<dbReference type="SignaLink" id="Q7Z449"/>
<dbReference type="UniPathway" id="UPA00383"/>
<dbReference type="BioGRID-ORCS" id="113612">
    <property type="hits" value="13 hits in 1153 CRISPR screens"/>
</dbReference>
<dbReference type="ChiTaRS" id="CYP2U1">
    <property type="organism name" value="human"/>
</dbReference>
<dbReference type="GeneWiki" id="CYP2U1"/>
<dbReference type="GenomeRNAi" id="113612"/>
<dbReference type="Pharos" id="Q7Z449">
    <property type="development level" value="Tbio"/>
</dbReference>
<dbReference type="PRO" id="PR:Q7Z449"/>
<dbReference type="Proteomes" id="UP000005640">
    <property type="component" value="Chromosome 4"/>
</dbReference>
<dbReference type="RNAct" id="Q7Z449">
    <property type="molecule type" value="protein"/>
</dbReference>
<dbReference type="Bgee" id="ENSG00000155016">
    <property type="expression patterns" value="Expressed in thymus and 181 other cell types or tissues"/>
</dbReference>
<dbReference type="ExpressionAtlas" id="Q7Z449">
    <property type="expression patterns" value="baseline and differential"/>
</dbReference>
<dbReference type="GO" id="GO:0005737">
    <property type="term" value="C:cytoplasm"/>
    <property type="evidence" value="ECO:0000318"/>
    <property type="project" value="GO_Central"/>
</dbReference>
<dbReference type="GO" id="GO:0005789">
    <property type="term" value="C:endoplasmic reticulum membrane"/>
    <property type="evidence" value="ECO:0000304"/>
    <property type="project" value="Reactome"/>
</dbReference>
<dbReference type="GO" id="GO:0043231">
    <property type="term" value="C:intracellular membrane-bounded organelle"/>
    <property type="evidence" value="ECO:0000318"/>
    <property type="project" value="GO_Central"/>
</dbReference>
<dbReference type="GO" id="GO:0005743">
    <property type="term" value="C:mitochondrial inner membrane"/>
    <property type="evidence" value="ECO:0007669"/>
    <property type="project" value="UniProtKB-SubCell"/>
</dbReference>
<dbReference type="GO" id="GO:0052869">
    <property type="term" value="F:arachidonate omega-hydroxylase activity"/>
    <property type="evidence" value="ECO:0000314"/>
    <property type="project" value="UniProtKB"/>
</dbReference>
<dbReference type="GO" id="GO:0020037">
    <property type="term" value="F:heme binding"/>
    <property type="evidence" value="ECO:0000318"/>
    <property type="project" value="GO_Central"/>
</dbReference>
<dbReference type="GO" id="GO:0005506">
    <property type="term" value="F:iron ion binding"/>
    <property type="evidence" value="ECO:0007669"/>
    <property type="project" value="InterPro"/>
</dbReference>
<dbReference type="GO" id="GO:0102033">
    <property type="term" value="F:long-chain fatty acid omega-hydroxylase activity"/>
    <property type="evidence" value="ECO:0007669"/>
    <property type="project" value="UniProtKB-EC"/>
</dbReference>
<dbReference type="GO" id="GO:0004497">
    <property type="term" value="F:monooxygenase activity"/>
    <property type="evidence" value="ECO:0000304"/>
    <property type="project" value="Reactome"/>
</dbReference>
<dbReference type="GO" id="GO:0016712">
    <property type="term" value="F:oxidoreductase activity, acting on paired donors, with incorporation or reduction of molecular oxygen, reduced flavin or flavoprotein as one donor, and incorporation of one atom of oxygen"/>
    <property type="evidence" value="ECO:0000318"/>
    <property type="project" value="GO_Central"/>
</dbReference>
<dbReference type="GO" id="GO:0008395">
    <property type="term" value="F:steroid hydroxylase activity"/>
    <property type="evidence" value="ECO:0000318"/>
    <property type="project" value="GO_Central"/>
</dbReference>
<dbReference type="GO" id="GO:1903604">
    <property type="term" value="P:cytochrome metabolic process"/>
    <property type="evidence" value="ECO:0000304"/>
    <property type="project" value="Reactome"/>
</dbReference>
<dbReference type="GO" id="GO:0097267">
    <property type="term" value="P:omega-hydroxylase P450 pathway"/>
    <property type="evidence" value="ECO:0000314"/>
    <property type="project" value="UniProtKB"/>
</dbReference>
<dbReference type="GO" id="GO:0006082">
    <property type="term" value="P:organic acid metabolic process"/>
    <property type="evidence" value="ECO:0000318"/>
    <property type="project" value="GO_Central"/>
</dbReference>
<dbReference type="GO" id="GO:0006805">
    <property type="term" value="P:xenobiotic metabolic process"/>
    <property type="evidence" value="ECO:0000318"/>
    <property type="project" value="GO_Central"/>
</dbReference>
<dbReference type="CDD" id="cd20666">
    <property type="entry name" value="CYP2U1"/>
    <property type="match status" value="1"/>
</dbReference>
<dbReference type="FunFam" id="1.10.630.10:FF:000017">
    <property type="entry name" value="cytochrome P450 2U1 isoform X1"/>
    <property type="match status" value="1"/>
</dbReference>
<dbReference type="Gene3D" id="1.10.630.10">
    <property type="entry name" value="Cytochrome P450"/>
    <property type="match status" value="1"/>
</dbReference>
<dbReference type="InterPro" id="IPR001128">
    <property type="entry name" value="Cyt_P450"/>
</dbReference>
<dbReference type="InterPro" id="IPR017972">
    <property type="entry name" value="Cyt_P450_CS"/>
</dbReference>
<dbReference type="InterPro" id="IPR002401">
    <property type="entry name" value="Cyt_P450_E_grp-I"/>
</dbReference>
<dbReference type="InterPro" id="IPR008069">
    <property type="entry name" value="Cyt_P450_E_grp-I_CYP2D-like"/>
</dbReference>
<dbReference type="InterPro" id="IPR036396">
    <property type="entry name" value="Cyt_P450_sf"/>
</dbReference>
<dbReference type="InterPro" id="IPR050182">
    <property type="entry name" value="Cytochrome_P450_fam2"/>
</dbReference>
<dbReference type="PANTHER" id="PTHR24300:SF364">
    <property type="entry name" value="CYTOCHROME P450 2U1"/>
    <property type="match status" value="1"/>
</dbReference>
<dbReference type="PANTHER" id="PTHR24300">
    <property type="entry name" value="CYTOCHROME P450 508A4-RELATED"/>
    <property type="match status" value="1"/>
</dbReference>
<dbReference type="Pfam" id="PF00067">
    <property type="entry name" value="p450"/>
    <property type="match status" value="1"/>
</dbReference>
<dbReference type="PRINTS" id="PR00463">
    <property type="entry name" value="EP450I"/>
</dbReference>
<dbReference type="PRINTS" id="PR01686">
    <property type="entry name" value="EP450ICYP2D"/>
</dbReference>
<dbReference type="PRINTS" id="PR00385">
    <property type="entry name" value="P450"/>
</dbReference>
<dbReference type="SUPFAM" id="SSF48264">
    <property type="entry name" value="Cytochrome P450"/>
    <property type="match status" value="1"/>
</dbReference>
<dbReference type="PROSITE" id="PS00086">
    <property type="entry name" value="CYTOCHROME_P450"/>
    <property type="match status" value="1"/>
</dbReference>
<name>CP2U1_HUMAN</name>
<sequence length="544" mass="61987">MSSPGPSQPPAEDPPWPARLLRAPLGLLRLDPSGGALLLCGLVALLGWSWLRRRRARGIPPGPTPWPLVGNFGHVLLPPFLRRRSWLSSRTRAAGIDPSVIGPQVLLAHLARVYGSIFSFFIGHYLVVVLSDFHSVREALVQQAEVFSDRPRVPLISIVTKEKGVVFAHYGPVWRQQRKFSHSTLRHFGLGKLSLEPKIIEEFKYVKAEMQKHGEDPFCPFSIISNAVSNIICSLCFGQRFDYTNSEFKKMLGFMSRGLEICLNSQVLLVNICPWLYYLPFGPFKELRQIEKDITSFLKKIIKDHQESLDRENPQDFIDMYLLHMEEERKNNSNSSFDEEYLFYIIGDLFIAGTDTTTNSLLWCLLYMSLNPDVQEKVHEEIERVIGANRAPSLTDKAQMPYTEATIMEVQRLTVVVPLAIPHMTSENTVLQGYTIPKGTLILPNLWSVHRDPAIWEKPEDFYPNRFLDDQGQLIKKETFIPFGIGKRVCMGEQLAKMELFLMFVSLMQSFAFALPEDSKKPLLTGRFGLTLAPHPFNITISRR</sequence>
<keyword id="KW-0025">Alternative splicing</keyword>
<keyword id="KW-0903">Direct protein sequencing</keyword>
<keyword id="KW-0225">Disease variant</keyword>
<keyword id="KW-0256">Endoplasmic reticulum</keyword>
<keyword id="KW-0349">Heme</keyword>
<keyword id="KW-0890">Hereditary spastic paraplegia</keyword>
<keyword id="KW-0408">Iron</keyword>
<keyword id="KW-0443">Lipid metabolism</keyword>
<keyword id="KW-0472">Membrane</keyword>
<keyword id="KW-0479">Metal-binding</keyword>
<keyword id="KW-0492">Microsome</keyword>
<keyword id="KW-0496">Mitochondrion</keyword>
<keyword id="KW-0999">Mitochondrion inner membrane</keyword>
<keyword id="KW-0503">Monooxygenase</keyword>
<keyword id="KW-0523">Neurodegeneration</keyword>
<keyword id="KW-0560">Oxidoreductase</keyword>
<keyword id="KW-1267">Proteomics identification</keyword>
<keyword id="KW-1185">Reference proteome</keyword>
<keyword id="KW-0812">Transmembrane</keyword>
<keyword id="KW-1133">Transmembrane helix</keyword>
<evidence type="ECO:0000250" key="1"/>
<evidence type="ECO:0000255" key="2"/>
<evidence type="ECO:0000269" key="3">
    <source>
    </source>
</evidence>
<evidence type="ECO:0000269" key="4">
    <source>
    </source>
</evidence>
<evidence type="ECO:0000269" key="5">
    <source>
    </source>
</evidence>
<evidence type="ECO:0000269" key="6">
    <source>
    </source>
</evidence>
<evidence type="ECO:0000269" key="7">
    <source>
    </source>
</evidence>
<evidence type="ECO:0000303" key="8">
    <source>
    </source>
</evidence>
<evidence type="ECO:0000303" key="9">
    <source>
    </source>
</evidence>
<evidence type="ECO:0000303" key="10">
    <source>
    </source>
</evidence>
<evidence type="ECO:0000305" key="11"/>
<evidence type="ECO:0000305" key="12">
    <source>
    </source>
</evidence>
<evidence type="ECO:0000305" key="13">
    <source>
    </source>
</evidence>
<evidence type="ECO:0000312" key="14">
    <source>
        <dbReference type="HGNC" id="HGNC:20582"/>
    </source>
</evidence>
<reference key="1">
    <citation type="journal article" date="2004" name="J. Biol. Chem.">
        <title>CYP2U1, a novel human thymus- and brain-specific cytochrome P450, catalyzes omega- and (omega-1)-hydroxylation of fatty acids.</title>
        <authorList>
            <person name="Chuang S.S."/>
            <person name="Helvig C."/>
            <person name="Taimi M."/>
            <person name="Ramshaw H.A."/>
            <person name="Collop A.H."/>
            <person name="Amad M."/>
            <person name="White J.A."/>
            <person name="Petkovich M."/>
            <person name="Jones G."/>
            <person name="Korczak B."/>
        </authorList>
    </citation>
    <scope>NUCLEOTIDE SEQUENCE [MRNA] (ISOFORM 1)</scope>
    <scope>FUNCTION</scope>
    <scope>SUBCELLULAR LOCATION</scope>
    <scope>TISSUE SPECIFICITY</scope>
    <scope>DEVELOPMENTAL STAGE</scope>
    <scope>CATALYTIC ACTIVITY</scope>
    <scope>PATHWAY</scope>
    <source>
        <tissue>Thymus</tissue>
    </source>
</reference>
<reference key="2">
    <citation type="submission" date="2005-07" db="EMBL/GenBank/DDBJ databases">
        <authorList>
            <person name="Mural R.J."/>
            <person name="Istrail S."/>
            <person name="Sutton G.G."/>
            <person name="Florea L."/>
            <person name="Halpern A.L."/>
            <person name="Mobarry C.M."/>
            <person name="Lippert R."/>
            <person name="Walenz B."/>
            <person name="Shatkay H."/>
            <person name="Dew I."/>
            <person name="Miller J.R."/>
            <person name="Flanigan M.J."/>
            <person name="Edwards N.J."/>
            <person name="Bolanos R."/>
            <person name="Fasulo D."/>
            <person name="Halldorsson B.V."/>
            <person name="Hannenhalli S."/>
            <person name="Turner R."/>
            <person name="Yooseph S."/>
            <person name="Lu F."/>
            <person name="Nusskern D.R."/>
            <person name="Shue B.C."/>
            <person name="Zheng X.H."/>
            <person name="Zhong F."/>
            <person name="Delcher A.L."/>
            <person name="Huson D.H."/>
            <person name="Kravitz S.A."/>
            <person name="Mouchard L."/>
            <person name="Reinert K."/>
            <person name="Remington K.A."/>
            <person name="Clark A.G."/>
            <person name="Waterman M.S."/>
            <person name="Eichler E.E."/>
            <person name="Adams M.D."/>
            <person name="Hunkapiller M.W."/>
            <person name="Myers E.W."/>
            <person name="Venter J.C."/>
        </authorList>
    </citation>
    <scope>NUCLEOTIDE SEQUENCE [LARGE SCALE GENOMIC DNA]</scope>
</reference>
<reference key="3">
    <citation type="journal article" date="2004" name="Genome Res.">
        <title>The status, quality, and expansion of the NIH full-length cDNA project: the Mammalian Gene Collection (MGC).</title>
        <authorList>
            <consortium name="The MGC Project Team"/>
        </authorList>
    </citation>
    <scope>NUCLEOTIDE SEQUENCE [LARGE SCALE MRNA] (ISOFORMS 1 AND 2)</scope>
    <source>
        <tissue>Brain</tissue>
        <tissue>Mammary gland</tissue>
    </source>
</reference>
<reference key="4">
    <citation type="journal article" date="2004" name="Biochem. Biophys. Res. Commun.">
        <title>Characterization and tissue distribution of a novel human cytochrome P450-CYP2U1.</title>
        <authorList>
            <person name="Karlgren M."/>
            <person name="Backlund M."/>
            <person name="Johansson I."/>
            <person name="Oscarson M."/>
            <person name="Ingelman-Sundberg M."/>
        </authorList>
    </citation>
    <scope>TISSUE SPECIFICITY</scope>
</reference>
<reference key="5">
    <citation type="journal article" date="2005" name="Arch. Biochem. Biophys.">
        <title>Expression patterns of mouse and human CYP orthologs (families 1-4) during development and in different adult tissues.</title>
        <authorList>
            <person name="Choudhary D."/>
            <person name="Jansson I."/>
            <person name="Stoilov I."/>
            <person name="Sarfarazi M."/>
            <person name="Schenkman J.B."/>
        </authorList>
    </citation>
    <scope>TISSUE SPECIFICITY</scope>
    <scope>DEVELOPMENTAL STAGE</scope>
</reference>
<reference key="6">
    <citation type="journal article" date="2014" name="J. Biol. Chem.">
        <title>Oxidation of endogenous N-arachidonoylserotonin by human cytochrome P450 2U1.</title>
        <authorList>
            <person name="Siller M."/>
            <person name="Goyal S."/>
            <person name="Yoshimoto F.K."/>
            <person name="Xiao Y."/>
            <person name="Wei S."/>
            <person name="Guengerich F.P."/>
        </authorList>
    </citation>
    <scope>FUNCTION</scope>
    <scope>CATALYTIC ACTIVITY</scope>
    <scope>COFACTOR</scope>
    <scope>BIOPHYSICOCHEMICAL PROPERTIES</scope>
    <scope>PROTEIN SEQUENCE OF 60-544</scope>
    <scope>PATHWAY</scope>
</reference>
<reference key="7">
    <citation type="journal article" date="2012" name="Am. J. Hum. Genet.">
        <title>Alteration of fatty-acid-metabolizing enzymes affects mitochondrial form and function in hereditary spastic paraplegia.</title>
        <authorList>
            <person name="Tesson C."/>
            <person name="Nawara M."/>
            <person name="Salih M.A."/>
            <person name="Rossignol R."/>
            <person name="Zaki M.S."/>
            <person name="Al Balwi M."/>
            <person name="Schule R."/>
            <person name="Mignot C."/>
            <person name="Obre E."/>
            <person name="Bouhouche A."/>
            <person name="Santorelli F.M."/>
            <person name="Durand C.M."/>
            <person name="Oteyza A.C."/>
            <person name="El-Hachimi K.H."/>
            <person name="Al Drees A."/>
            <person name="Bouslam N."/>
            <person name="Lamari F."/>
            <person name="Elmalik S.A."/>
            <person name="Kabiraj M.M."/>
            <person name="Seidahmed M.Z."/>
            <person name="Esteves T."/>
            <person name="Gaussen M."/>
            <person name="Monin M.L."/>
            <person name="Gyapay G."/>
            <person name="Lechner D."/>
            <person name="Gonzalez M."/>
            <person name="Depienne C."/>
            <person name="Mochel F."/>
            <person name="Lavie J."/>
            <person name="Schols L."/>
            <person name="Lacombe D."/>
            <person name="Yahyaoui M."/>
            <person name="Al Abdulkareem I."/>
            <person name="Zuchner S."/>
            <person name="Yamashita A."/>
            <person name="Benomar A."/>
            <person name="Goizet C."/>
            <person name="Durr A."/>
            <person name="Gleeson J.G."/>
            <person name="Darios F."/>
            <person name="Brice A."/>
            <person name="Stevanin G."/>
        </authorList>
    </citation>
    <scope>VARIANTS SPG56 ARG-262; VAL-316; GLY-380 AND TRP-488</scope>
    <scope>SUBCELLULAR LOCATION</scope>
</reference>
<accession>Q7Z449</accession>
<accession>B2RMV7</accession>
<accession>Q96EQ6</accession>
<feature type="chain" id="PRO_0000291756" description="Cytochrome P450 2U1">
    <location>
        <begin position="1"/>
        <end position="544"/>
    </location>
</feature>
<feature type="transmembrane region" description="Helical" evidence="2">
    <location>
        <begin position="30"/>
        <end position="50"/>
    </location>
</feature>
<feature type="transmembrane region" description="Helical" evidence="2">
    <location>
        <begin position="113"/>
        <end position="133"/>
    </location>
</feature>
<feature type="transmembrane region" description="Helical" evidence="2">
    <location>
        <begin position="261"/>
        <end position="281"/>
    </location>
</feature>
<feature type="transmembrane region" description="Helical" evidence="2">
    <location>
        <begin position="342"/>
        <end position="362"/>
    </location>
</feature>
<feature type="transmembrane region" description="Helical" evidence="2">
    <location>
        <begin position="495"/>
        <end position="515"/>
    </location>
</feature>
<feature type="binding site" description="axial binding residue" evidence="1">
    <location>
        <position position="490"/>
    </location>
    <ligand>
        <name>heme</name>
        <dbReference type="ChEBI" id="CHEBI:30413"/>
    </ligand>
    <ligandPart>
        <name>Fe</name>
        <dbReference type="ChEBI" id="CHEBI:18248"/>
    </ligandPart>
</feature>
<feature type="splice variant" id="VSP_026222" description="In isoform 2." evidence="9">
    <original>GVVFA</original>
    <variation>ELFQE</variation>
    <location>
        <begin position="164"/>
        <end position="168"/>
    </location>
</feature>
<feature type="splice variant" id="VSP_026223" description="In isoform 2." evidence="9">
    <location>
        <begin position="169"/>
        <end position="544"/>
    </location>
</feature>
<feature type="sequence variant" id="VAR_069575" description="In SPG56; dbSNP:rs397514515." evidence="6">
    <original>C</original>
    <variation>R</variation>
    <location>
        <position position="262"/>
    </location>
</feature>
<feature type="sequence variant" id="VAR_069576" description="In SPG56; dbSNP:rs397514513." evidence="6">
    <original>D</original>
    <variation>V</variation>
    <location>
        <position position="316"/>
    </location>
</feature>
<feature type="sequence variant" id="VAR_069577" description="In SPG56; dbSNP:rs397514514." evidence="6">
    <original>E</original>
    <variation>G</variation>
    <location>
        <position position="380"/>
    </location>
</feature>
<feature type="sequence variant" id="VAR_069578" description="In SPG56; dbSNP:rs141431913." evidence="6">
    <original>R</original>
    <variation>W</variation>
    <location>
        <position position="488"/>
    </location>
</feature>
<protein>
    <recommendedName>
        <fullName evidence="10">Cytochrome P450 2U1</fullName>
    </recommendedName>
    <alternativeName>
        <fullName evidence="13">Long-chain fatty acid omega-monooxygenase</fullName>
        <ecNumber evidence="3 7">1.14.14.80</ecNumber>
    </alternativeName>
</protein>
<proteinExistence type="evidence at protein level"/>
<organism>
    <name type="scientific">Homo sapiens</name>
    <name type="common">Human</name>
    <dbReference type="NCBI Taxonomy" id="9606"/>
    <lineage>
        <taxon>Eukaryota</taxon>
        <taxon>Metazoa</taxon>
        <taxon>Chordata</taxon>
        <taxon>Craniata</taxon>
        <taxon>Vertebrata</taxon>
        <taxon>Euteleostomi</taxon>
        <taxon>Mammalia</taxon>
        <taxon>Eutheria</taxon>
        <taxon>Euarchontoglires</taxon>
        <taxon>Primates</taxon>
        <taxon>Haplorrhini</taxon>
        <taxon>Catarrhini</taxon>
        <taxon>Hominidae</taxon>
        <taxon>Homo</taxon>
    </lineage>
</organism>